<evidence type="ECO:0000250" key="1"/>
<evidence type="ECO:0000250" key="2">
    <source>
        <dbReference type="UniProtKB" id="D3ZRP6"/>
    </source>
</evidence>
<evidence type="ECO:0000255" key="3">
    <source>
        <dbReference type="PROSITE-ProRule" id="PRU00404"/>
    </source>
</evidence>
<evidence type="ECO:0000303" key="4">
    <source>
    </source>
</evidence>
<evidence type="ECO:0000305" key="5"/>
<feature type="chain" id="PRO_0000193772" description="AP-1 complex subunit mu-2">
    <location>
        <begin position="1"/>
        <end position="423"/>
    </location>
</feature>
<feature type="domain" description="MHD" evidence="3">
    <location>
        <begin position="168"/>
        <end position="421"/>
    </location>
</feature>
<feature type="splice variant" id="VSP_000169" description="In isoform 2." evidence="4">
    <original>R</original>
    <variation>LSG</variation>
    <location>
        <position position="225"/>
    </location>
</feature>
<feature type="sequence conflict" description="In Ref. 4; AAH05021." evidence="5" ref="4">
    <original>S</original>
    <variation>R</variation>
    <location>
        <position position="364"/>
    </location>
</feature>
<dbReference type="EMBL" id="AF020797">
    <property type="protein sequence ID" value="AAD25870.2"/>
    <property type="molecule type" value="mRNA"/>
</dbReference>
<dbReference type="EMBL" id="AK315689">
    <property type="protein sequence ID" value="BAG38052.1"/>
    <property type="molecule type" value="mRNA"/>
</dbReference>
<dbReference type="EMBL" id="CH471106">
    <property type="protein sequence ID" value="EAW84124.1"/>
    <property type="molecule type" value="Genomic_DNA"/>
</dbReference>
<dbReference type="EMBL" id="BC003387">
    <property type="protein sequence ID" value="AAH03387.1"/>
    <property type="molecule type" value="mRNA"/>
</dbReference>
<dbReference type="EMBL" id="BC003612">
    <property type="protein sequence ID" value="AAH03612.1"/>
    <property type="molecule type" value="mRNA"/>
</dbReference>
<dbReference type="EMBL" id="BC005021">
    <property type="protein sequence ID" value="AAH05021.1"/>
    <property type="molecule type" value="mRNA"/>
</dbReference>
<dbReference type="CCDS" id="CCDS45964.1">
    <molecule id="Q9Y6Q5-1"/>
</dbReference>
<dbReference type="CCDS" id="CCDS77234.1">
    <molecule id="Q9Y6Q5-2"/>
</dbReference>
<dbReference type="RefSeq" id="NP_001287816.1">
    <molecule id="Q9Y6Q5-2"/>
    <property type="nucleotide sequence ID" value="NM_001300887.2"/>
</dbReference>
<dbReference type="RefSeq" id="NP_005489.2">
    <molecule id="Q9Y6Q5-1"/>
    <property type="nucleotide sequence ID" value="NM_005498.4"/>
</dbReference>
<dbReference type="SMR" id="Q9Y6Q5"/>
<dbReference type="BioGRID" id="115364">
    <property type="interactions" value="85"/>
</dbReference>
<dbReference type="ComplexPortal" id="CPX-5050">
    <property type="entry name" value="Endothelial AP-1 Adaptor complex, sigma1a variant"/>
</dbReference>
<dbReference type="CORUM" id="Q9Y6Q5"/>
<dbReference type="FunCoup" id="Q9Y6Q5">
    <property type="interactions" value="415"/>
</dbReference>
<dbReference type="IntAct" id="Q9Y6Q5">
    <property type="interactions" value="36"/>
</dbReference>
<dbReference type="MINT" id="Q9Y6Q5"/>
<dbReference type="STRING" id="9606.ENSP00000465685"/>
<dbReference type="GlyGen" id="Q9Y6Q5">
    <property type="glycosylation" value="3 sites, 1 O-linked glycan (3 sites)"/>
</dbReference>
<dbReference type="iPTMnet" id="Q9Y6Q5"/>
<dbReference type="PhosphoSitePlus" id="Q9Y6Q5"/>
<dbReference type="SwissPalm" id="Q9Y6Q5"/>
<dbReference type="BioMuta" id="AP1M2"/>
<dbReference type="DMDM" id="13123953"/>
<dbReference type="jPOST" id="Q9Y6Q5"/>
<dbReference type="MassIVE" id="Q9Y6Q5"/>
<dbReference type="PaxDb" id="9606-ENSP00000250244"/>
<dbReference type="PeptideAtlas" id="Q9Y6Q5"/>
<dbReference type="ProteomicsDB" id="86763">
    <molecule id="Q9Y6Q5-1"/>
</dbReference>
<dbReference type="ProteomicsDB" id="86764">
    <molecule id="Q9Y6Q5-2"/>
</dbReference>
<dbReference type="Pumba" id="Q9Y6Q5"/>
<dbReference type="Antibodypedia" id="25388">
    <property type="antibodies" value="130 antibodies from 25 providers"/>
</dbReference>
<dbReference type="DNASU" id="10053"/>
<dbReference type="Ensembl" id="ENST00000250244.11">
    <molecule id="Q9Y6Q5-1"/>
    <property type="protein sequence ID" value="ENSP00000250244.5"/>
    <property type="gene ID" value="ENSG00000129354.12"/>
</dbReference>
<dbReference type="Ensembl" id="ENST00000590923.5">
    <molecule id="Q9Y6Q5-2"/>
    <property type="protein sequence ID" value="ENSP00000465685.1"/>
    <property type="gene ID" value="ENSG00000129354.12"/>
</dbReference>
<dbReference type="GeneID" id="10053"/>
<dbReference type="KEGG" id="hsa:10053"/>
<dbReference type="MANE-Select" id="ENST00000250244.11">
    <property type="protein sequence ID" value="ENSP00000250244.5"/>
    <property type="RefSeq nucleotide sequence ID" value="NM_005498.5"/>
    <property type="RefSeq protein sequence ID" value="NP_005489.2"/>
</dbReference>
<dbReference type="UCSC" id="uc002mpc.4">
    <molecule id="Q9Y6Q5-1"/>
    <property type="organism name" value="human"/>
</dbReference>
<dbReference type="AGR" id="HGNC:558"/>
<dbReference type="CTD" id="10053"/>
<dbReference type="DisGeNET" id="10053"/>
<dbReference type="GeneCards" id="AP1M2"/>
<dbReference type="HGNC" id="HGNC:558">
    <property type="gene designation" value="AP1M2"/>
</dbReference>
<dbReference type="HPA" id="ENSG00000129354">
    <property type="expression patterns" value="Low tissue specificity"/>
</dbReference>
<dbReference type="MIM" id="607309">
    <property type="type" value="gene"/>
</dbReference>
<dbReference type="neXtProt" id="NX_Q9Y6Q5"/>
<dbReference type="OpenTargets" id="ENSG00000129354"/>
<dbReference type="PharmGKB" id="PA24849"/>
<dbReference type="VEuPathDB" id="HostDB:ENSG00000129354"/>
<dbReference type="eggNOG" id="KOG0937">
    <property type="taxonomic scope" value="Eukaryota"/>
</dbReference>
<dbReference type="GeneTree" id="ENSGT00940000159089"/>
<dbReference type="HOGENOM" id="CLU_026996_0_0_1"/>
<dbReference type="InParanoid" id="Q9Y6Q5"/>
<dbReference type="OMA" id="HSRLEIM"/>
<dbReference type="OrthoDB" id="10259133at2759"/>
<dbReference type="PAN-GO" id="Q9Y6Q5">
    <property type="GO annotations" value="3 GO annotations based on evolutionary models"/>
</dbReference>
<dbReference type="PhylomeDB" id="Q9Y6Q5"/>
<dbReference type="TreeFam" id="TF300393"/>
<dbReference type="PathwayCommons" id="Q9Y6Q5"/>
<dbReference type="Reactome" id="R-HSA-164940">
    <property type="pathway name" value="Nef mediated downregulation of MHC class I complex cell surface expression"/>
</dbReference>
<dbReference type="Reactome" id="R-HSA-2132295">
    <property type="pathway name" value="MHC class II antigen presentation"/>
</dbReference>
<dbReference type="Reactome" id="R-HSA-432720">
    <property type="pathway name" value="Lysosome Vesicle Biogenesis"/>
</dbReference>
<dbReference type="Reactome" id="R-HSA-432722">
    <property type="pathway name" value="Golgi Associated Vesicle Biogenesis"/>
</dbReference>
<dbReference type="SignaLink" id="Q9Y6Q5"/>
<dbReference type="BioGRID-ORCS" id="10053">
    <property type="hits" value="13 hits in 1145 CRISPR screens"/>
</dbReference>
<dbReference type="ChiTaRS" id="AP1M2">
    <property type="organism name" value="human"/>
</dbReference>
<dbReference type="GeneWiki" id="AP1M2"/>
<dbReference type="GenomeRNAi" id="10053"/>
<dbReference type="Pharos" id="Q9Y6Q5">
    <property type="development level" value="Tbio"/>
</dbReference>
<dbReference type="PRO" id="PR:Q9Y6Q5"/>
<dbReference type="Proteomes" id="UP000005640">
    <property type="component" value="Chromosome 19"/>
</dbReference>
<dbReference type="RNAct" id="Q9Y6Q5">
    <property type="molecule type" value="protein"/>
</dbReference>
<dbReference type="Bgee" id="ENSG00000129354">
    <property type="expression patterns" value="Expressed in mucosa of transverse colon and 126 other cell types or tissues"/>
</dbReference>
<dbReference type="ExpressionAtlas" id="Q9Y6Q5">
    <property type="expression patterns" value="baseline and differential"/>
</dbReference>
<dbReference type="GO" id="GO:0030121">
    <property type="term" value="C:AP-1 adaptor complex"/>
    <property type="evidence" value="ECO:0000303"/>
    <property type="project" value="ComplexPortal"/>
</dbReference>
<dbReference type="GO" id="GO:0030136">
    <property type="term" value="C:clathrin-coated vesicle"/>
    <property type="evidence" value="ECO:0000318"/>
    <property type="project" value="GO_Central"/>
</dbReference>
<dbReference type="GO" id="GO:0030659">
    <property type="term" value="C:cytoplasmic vesicle membrane"/>
    <property type="evidence" value="ECO:0000304"/>
    <property type="project" value="Reactome"/>
</dbReference>
<dbReference type="GO" id="GO:0005829">
    <property type="term" value="C:cytosol"/>
    <property type="evidence" value="ECO:0000314"/>
    <property type="project" value="HPA"/>
</dbReference>
<dbReference type="GO" id="GO:0000139">
    <property type="term" value="C:Golgi membrane"/>
    <property type="evidence" value="ECO:0000304"/>
    <property type="project" value="Reactome"/>
</dbReference>
<dbReference type="GO" id="GO:0043231">
    <property type="term" value="C:intracellular membrane-bounded organelle"/>
    <property type="evidence" value="ECO:0000314"/>
    <property type="project" value="HPA"/>
</dbReference>
<dbReference type="GO" id="GO:0005765">
    <property type="term" value="C:lysosomal membrane"/>
    <property type="evidence" value="ECO:0000304"/>
    <property type="project" value="Reactome"/>
</dbReference>
<dbReference type="GO" id="GO:0032588">
    <property type="term" value="C:trans-Golgi network membrane"/>
    <property type="evidence" value="ECO:0000304"/>
    <property type="project" value="Reactome"/>
</dbReference>
<dbReference type="GO" id="GO:0035615">
    <property type="term" value="F:clathrin adaptor activity"/>
    <property type="evidence" value="ECO:0000318"/>
    <property type="project" value="GO_Central"/>
</dbReference>
<dbReference type="GO" id="GO:0110010">
    <property type="term" value="P:basolateral protein secretion"/>
    <property type="evidence" value="ECO:0000303"/>
    <property type="project" value="ComplexPortal"/>
</dbReference>
<dbReference type="GO" id="GO:0006886">
    <property type="term" value="P:intracellular protein transport"/>
    <property type="evidence" value="ECO:0007669"/>
    <property type="project" value="InterPro"/>
</dbReference>
<dbReference type="GO" id="GO:0006605">
    <property type="term" value="P:protein targeting"/>
    <property type="evidence" value="ECO:0000304"/>
    <property type="project" value="ProtInc"/>
</dbReference>
<dbReference type="GO" id="GO:0006903">
    <property type="term" value="P:vesicle targeting"/>
    <property type="evidence" value="ECO:0000304"/>
    <property type="project" value="ProtInc"/>
</dbReference>
<dbReference type="GO" id="GO:0016192">
    <property type="term" value="P:vesicle-mediated transport"/>
    <property type="evidence" value="ECO:0000318"/>
    <property type="project" value="GO_Central"/>
</dbReference>
<dbReference type="CDD" id="cd14835">
    <property type="entry name" value="AP1_Mu_N"/>
    <property type="match status" value="1"/>
</dbReference>
<dbReference type="FunFam" id="2.60.40.1170:FF:000002">
    <property type="entry name" value="AP-1 complex subunit mu-1 isoform 1"/>
    <property type="match status" value="1"/>
</dbReference>
<dbReference type="FunFam" id="2.60.40.1170:FF:000046">
    <property type="entry name" value="AP-1 complex subunit mu-2"/>
    <property type="match status" value="1"/>
</dbReference>
<dbReference type="FunFam" id="3.30.450.60:FF:000047">
    <property type="entry name" value="AP-1 complex subunit mu-2"/>
    <property type="match status" value="1"/>
</dbReference>
<dbReference type="Gene3D" id="3.30.450.60">
    <property type="match status" value="1"/>
</dbReference>
<dbReference type="Gene3D" id="2.60.40.1170">
    <property type="entry name" value="Mu homology domain, subdomain B"/>
    <property type="match status" value="2"/>
</dbReference>
<dbReference type="InterPro" id="IPR050431">
    <property type="entry name" value="Adaptor_comp_med_subunit"/>
</dbReference>
<dbReference type="InterPro" id="IPR036168">
    <property type="entry name" value="AP2_Mu_C_sf"/>
</dbReference>
<dbReference type="InterPro" id="IPR022775">
    <property type="entry name" value="AP_mu_sigma_su"/>
</dbReference>
<dbReference type="InterPro" id="IPR001392">
    <property type="entry name" value="Clathrin_mu"/>
</dbReference>
<dbReference type="InterPro" id="IPR018240">
    <property type="entry name" value="Clathrin_mu_CS"/>
</dbReference>
<dbReference type="InterPro" id="IPR011012">
    <property type="entry name" value="Longin-like_dom_sf"/>
</dbReference>
<dbReference type="InterPro" id="IPR028565">
    <property type="entry name" value="MHD"/>
</dbReference>
<dbReference type="PANTHER" id="PTHR10529">
    <property type="entry name" value="AP COMPLEX SUBUNIT MU"/>
    <property type="match status" value="1"/>
</dbReference>
<dbReference type="Pfam" id="PF00928">
    <property type="entry name" value="Adap_comp_sub"/>
    <property type="match status" value="1"/>
</dbReference>
<dbReference type="Pfam" id="PF01217">
    <property type="entry name" value="Clat_adaptor_s"/>
    <property type="match status" value="1"/>
</dbReference>
<dbReference type="PIRSF" id="PIRSF005992">
    <property type="entry name" value="Clathrin_mu"/>
    <property type="match status" value="1"/>
</dbReference>
<dbReference type="PRINTS" id="PR00314">
    <property type="entry name" value="CLATHRINADPT"/>
</dbReference>
<dbReference type="SUPFAM" id="SSF49447">
    <property type="entry name" value="Second domain of Mu2 adaptin subunit (ap50) of ap2 adaptor"/>
    <property type="match status" value="1"/>
</dbReference>
<dbReference type="SUPFAM" id="SSF64356">
    <property type="entry name" value="SNARE-like"/>
    <property type="match status" value="1"/>
</dbReference>
<dbReference type="PROSITE" id="PS00990">
    <property type="entry name" value="CLAT_ADAPTOR_M_1"/>
    <property type="match status" value="1"/>
</dbReference>
<dbReference type="PROSITE" id="PS00991">
    <property type="entry name" value="CLAT_ADAPTOR_M_2"/>
    <property type="match status" value="1"/>
</dbReference>
<dbReference type="PROSITE" id="PS51072">
    <property type="entry name" value="MHD"/>
    <property type="match status" value="1"/>
</dbReference>
<protein>
    <recommendedName>
        <fullName>AP-1 complex subunit mu-2</fullName>
    </recommendedName>
    <alternativeName>
        <fullName>AP-mu chain family member mu1B</fullName>
    </alternativeName>
    <alternativeName>
        <fullName>Adaptor protein complex AP-1 subunit mu-2</fullName>
    </alternativeName>
    <alternativeName>
        <fullName>Adaptor-related protein complex 1 subunit mu-2</fullName>
    </alternativeName>
    <alternativeName>
        <fullName>Clathrin assembly protein complex 1 mu-2 medium chain 2</fullName>
    </alternativeName>
    <alternativeName>
        <fullName>Golgi adaptor HA1/AP1 adaptin mu-2 subunit</fullName>
    </alternativeName>
    <alternativeName>
        <fullName>Mu-adaptin 2</fullName>
    </alternativeName>
    <alternativeName>
        <fullName>Mu1B-adaptin</fullName>
    </alternativeName>
</protein>
<proteinExistence type="evidence at protein level"/>
<reference key="1">
    <citation type="journal article" date="1999" name="FEBS Lett.">
        <title>Mu1B, a novel adaptor medium chain expressed in polarized epithelial cells.</title>
        <authorList>
            <person name="Ohno H."/>
            <person name="Tomemori T."/>
            <person name="Nakatsu F."/>
            <person name="Okazaki Y."/>
            <person name="Aguilar R.C."/>
            <person name="Foelsch H."/>
            <person name="Mellman I."/>
            <person name="Saito T."/>
            <person name="Shirasawa T."/>
            <person name="Bonifacino J.S."/>
        </authorList>
    </citation>
    <scope>NUCLEOTIDE SEQUENCE [MRNA] (ISOFORM 1)</scope>
    <source>
        <tissue>Placenta</tissue>
    </source>
</reference>
<reference key="2">
    <citation type="journal article" date="2004" name="Nat. Genet.">
        <title>Complete sequencing and characterization of 21,243 full-length human cDNAs.</title>
        <authorList>
            <person name="Ota T."/>
            <person name="Suzuki Y."/>
            <person name="Nishikawa T."/>
            <person name="Otsuki T."/>
            <person name="Sugiyama T."/>
            <person name="Irie R."/>
            <person name="Wakamatsu A."/>
            <person name="Hayashi K."/>
            <person name="Sato H."/>
            <person name="Nagai K."/>
            <person name="Kimura K."/>
            <person name="Makita H."/>
            <person name="Sekine M."/>
            <person name="Obayashi M."/>
            <person name="Nishi T."/>
            <person name="Shibahara T."/>
            <person name="Tanaka T."/>
            <person name="Ishii S."/>
            <person name="Yamamoto J."/>
            <person name="Saito K."/>
            <person name="Kawai Y."/>
            <person name="Isono Y."/>
            <person name="Nakamura Y."/>
            <person name="Nagahari K."/>
            <person name="Murakami K."/>
            <person name="Yasuda T."/>
            <person name="Iwayanagi T."/>
            <person name="Wagatsuma M."/>
            <person name="Shiratori A."/>
            <person name="Sudo H."/>
            <person name="Hosoiri T."/>
            <person name="Kaku Y."/>
            <person name="Kodaira H."/>
            <person name="Kondo H."/>
            <person name="Sugawara M."/>
            <person name="Takahashi M."/>
            <person name="Kanda K."/>
            <person name="Yokoi T."/>
            <person name="Furuya T."/>
            <person name="Kikkawa E."/>
            <person name="Omura Y."/>
            <person name="Abe K."/>
            <person name="Kamihara K."/>
            <person name="Katsuta N."/>
            <person name="Sato K."/>
            <person name="Tanikawa M."/>
            <person name="Yamazaki M."/>
            <person name="Ninomiya K."/>
            <person name="Ishibashi T."/>
            <person name="Yamashita H."/>
            <person name="Murakawa K."/>
            <person name="Fujimori K."/>
            <person name="Tanai H."/>
            <person name="Kimata M."/>
            <person name="Watanabe M."/>
            <person name="Hiraoka S."/>
            <person name="Chiba Y."/>
            <person name="Ishida S."/>
            <person name="Ono Y."/>
            <person name="Takiguchi S."/>
            <person name="Watanabe S."/>
            <person name="Yosida M."/>
            <person name="Hotuta T."/>
            <person name="Kusano J."/>
            <person name="Kanehori K."/>
            <person name="Takahashi-Fujii A."/>
            <person name="Hara H."/>
            <person name="Tanase T.-O."/>
            <person name="Nomura Y."/>
            <person name="Togiya S."/>
            <person name="Komai F."/>
            <person name="Hara R."/>
            <person name="Takeuchi K."/>
            <person name="Arita M."/>
            <person name="Imose N."/>
            <person name="Musashino K."/>
            <person name="Yuuki H."/>
            <person name="Oshima A."/>
            <person name="Sasaki N."/>
            <person name="Aotsuka S."/>
            <person name="Yoshikawa Y."/>
            <person name="Matsunawa H."/>
            <person name="Ichihara T."/>
            <person name="Shiohata N."/>
            <person name="Sano S."/>
            <person name="Moriya S."/>
            <person name="Momiyama H."/>
            <person name="Satoh N."/>
            <person name="Takami S."/>
            <person name="Terashima Y."/>
            <person name="Suzuki O."/>
            <person name="Nakagawa S."/>
            <person name="Senoh A."/>
            <person name="Mizoguchi H."/>
            <person name="Goto Y."/>
            <person name="Shimizu F."/>
            <person name="Wakebe H."/>
            <person name="Hishigaki H."/>
            <person name="Watanabe T."/>
            <person name="Sugiyama A."/>
            <person name="Takemoto M."/>
            <person name="Kawakami B."/>
            <person name="Yamazaki M."/>
            <person name="Watanabe K."/>
            <person name="Kumagai A."/>
            <person name="Itakura S."/>
            <person name="Fukuzumi Y."/>
            <person name="Fujimori Y."/>
            <person name="Komiyama M."/>
            <person name="Tashiro H."/>
            <person name="Tanigami A."/>
            <person name="Fujiwara T."/>
            <person name="Ono T."/>
            <person name="Yamada K."/>
            <person name="Fujii Y."/>
            <person name="Ozaki K."/>
            <person name="Hirao M."/>
            <person name="Ohmori Y."/>
            <person name="Kawabata A."/>
            <person name="Hikiji T."/>
            <person name="Kobatake N."/>
            <person name="Inagaki H."/>
            <person name="Ikema Y."/>
            <person name="Okamoto S."/>
            <person name="Okitani R."/>
            <person name="Kawakami T."/>
            <person name="Noguchi S."/>
            <person name="Itoh T."/>
            <person name="Shigeta K."/>
            <person name="Senba T."/>
            <person name="Matsumura K."/>
            <person name="Nakajima Y."/>
            <person name="Mizuno T."/>
            <person name="Morinaga M."/>
            <person name="Sasaki M."/>
            <person name="Togashi T."/>
            <person name="Oyama M."/>
            <person name="Hata H."/>
            <person name="Watanabe M."/>
            <person name="Komatsu T."/>
            <person name="Mizushima-Sugano J."/>
            <person name="Satoh T."/>
            <person name="Shirai Y."/>
            <person name="Takahashi Y."/>
            <person name="Nakagawa K."/>
            <person name="Okumura K."/>
            <person name="Nagase T."/>
            <person name="Nomura N."/>
            <person name="Kikuchi H."/>
            <person name="Masuho Y."/>
            <person name="Yamashita R."/>
            <person name="Nakai K."/>
            <person name="Yada T."/>
            <person name="Nakamura Y."/>
            <person name="Ohara O."/>
            <person name="Isogai T."/>
            <person name="Sugano S."/>
        </authorList>
    </citation>
    <scope>NUCLEOTIDE SEQUENCE [LARGE SCALE MRNA] (ISOFORM 1)</scope>
    <source>
        <tissue>Testis</tissue>
    </source>
</reference>
<reference key="3">
    <citation type="submission" date="2005-07" db="EMBL/GenBank/DDBJ databases">
        <authorList>
            <person name="Mural R.J."/>
            <person name="Istrail S."/>
            <person name="Sutton G.G."/>
            <person name="Florea L."/>
            <person name="Halpern A.L."/>
            <person name="Mobarry C.M."/>
            <person name="Lippert R."/>
            <person name="Walenz B."/>
            <person name="Shatkay H."/>
            <person name="Dew I."/>
            <person name="Miller J.R."/>
            <person name="Flanigan M.J."/>
            <person name="Edwards N.J."/>
            <person name="Bolanos R."/>
            <person name="Fasulo D."/>
            <person name="Halldorsson B.V."/>
            <person name="Hannenhalli S."/>
            <person name="Turner R."/>
            <person name="Yooseph S."/>
            <person name="Lu F."/>
            <person name="Nusskern D.R."/>
            <person name="Shue B.C."/>
            <person name="Zheng X.H."/>
            <person name="Zhong F."/>
            <person name="Delcher A.L."/>
            <person name="Huson D.H."/>
            <person name="Kravitz S.A."/>
            <person name="Mouchard L."/>
            <person name="Reinert K."/>
            <person name="Remington K.A."/>
            <person name="Clark A.G."/>
            <person name="Waterman M.S."/>
            <person name="Eichler E.E."/>
            <person name="Adams M.D."/>
            <person name="Hunkapiller M.W."/>
            <person name="Myers E.W."/>
            <person name="Venter J.C."/>
        </authorList>
    </citation>
    <scope>NUCLEOTIDE SEQUENCE [LARGE SCALE GENOMIC DNA]</scope>
</reference>
<reference key="4">
    <citation type="journal article" date="2004" name="Genome Res.">
        <title>The status, quality, and expansion of the NIH full-length cDNA project: the Mammalian Gene Collection (MGC).</title>
        <authorList>
            <consortium name="The MGC Project Team"/>
        </authorList>
    </citation>
    <scope>NUCLEOTIDE SEQUENCE [LARGE SCALE MRNA] (ISOFORMS 1 AND 2)</scope>
    <source>
        <tissue>Colon</tissue>
        <tissue>Placenta</tissue>
    </source>
</reference>
<reference key="5">
    <citation type="journal article" date="2011" name="BMC Syst. Biol.">
        <title>Initial characterization of the human central proteome.</title>
        <authorList>
            <person name="Burkard T.R."/>
            <person name="Planyavsky M."/>
            <person name="Kaupe I."/>
            <person name="Breitwieser F.P."/>
            <person name="Buerckstuemmer T."/>
            <person name="Bennett K.L."/>
            <person name="Superti-Furga G."/>
            <person name="Colinge J."/>
        </authorList>
    </citation>
    <scope>IDENTIFICATION BY MASS SPECTROMETRY [LARGE SCALE ANALYSIS]</scope>
</reference>
<organism>
    <name type="scientific">Homo sapiens</name>
    <name type="common">Human</name>
    <dbReference type="NCBI Taxonomy" id="9606"/>
    <lineage>
        <taxon>Eukaryota</taxon>
        <taxon>Metazoa</taxon>
        <taxon>Chordata</taxon>
        <taxon>Craniata</taxon>
        <taxon>Vertebrata</taxon>
        <taxon>Euteleostomi</taxon>
        <taxon>Mammalia</taxon>
        <taxon>Eutheria</taxon>
        <taxon>Euarchontoglires</taxon>
        <taxon>Primates</taxon>
        <taxon>Haplorrhini</taxon>
        <taxon>Catarrhini</taxon>
        <taxon>Hominidae</taxon>
        <taxon>Homo</taxon>
    </lineage>
</organism>
<comment type="function">
    <text>Subunit of clathrin-associated adaptor protein complex 1 that plays a role in protein sorting in the trans-Golgi network (TGN) and endosomes. The AP complexes mediate the recruitment of clathrin to membranes and the recognition of sorting signals within the cytosolic tails of transmembrane cargo molecules.</text>
</comment>
<comment type="subunit">
    <text evidence="2">Adaptor protein complex 1 (AP-1) is a heterotetramer composed of two large adaptins (gamma-type subunit AP1G1 and beta-type subunit AP1B1), a medium adaptin (mu-type subunit AP1M1 or AP1M2) and a small adaptin (sigma-type subunit AP1S1 or AP1S2 or AP1S3). Interacts with P2X4 (By similarity).</text>
</comment>
<comment type="interaction">
    <interactant intactId="EBI-752250">
        <id>Q9Y6Q5</id>
    </interactant>
    <interactant intactId="EBI-432924">
        <id>P63010</id>
        <label>AP2B1</label>
    </interactant>
    <organismsDiffer>false</organismsDiffer>
    <experiments>6</experiments>
</comment>
<comment type="subcellular location">
    <subcellularLocation>
        <location>Golgi apparatus</location>
    </subcellularLocation>
    <subcellularLocation>
        <location>Cytoplasmic vesicle</location>
        <location>Clathrin-coated vesicle membrane</location>
        <topology>Peripheral membrane protein</topology>
        <orientation>Cytoplasmic side</orientation>
    </subcellularLocation>
    <text>Component of the coat surrounding the cytoplasmic face of coated vesicles located at the Golgi complex.</text>
</comment>
<comment type="alternative products">
    <event type="alternative splicing"/>
    <isoform>
        <id>Q9Y6Q5-1</id>
        <name>1</name>
        <sequence type="displayed"/>
    </isoform>
    <isoform>
        <id>Q9Y6Q5-2</id>
        <name>2</name>
        <sequence type="described" ref="VSP_000169"/>
    </isoform>
</comment>
<comment type="PTM">
    <text evidence="1">Phosphorylation of membrane-bound AP1M1/AP1M2 increases its affinity for sorting signals.</text>
</comment>
<comment type="similarity">
    <text evidence="5">Belongs to the adaptor complexes medium subunit family.</text>
</comment>
<accession>Q9Y6Q5</accession>
<accession>B2RDV5</accession>
<accession>Q9BSI8</accession>
<keyword id="KW-0025">Alternative splicing</keyword>
<keyword id="KW-0968">Cytoplasmic vesicle</keyword>
<keyword id="KW-0333">Golgi apparatus</keyword>
<keyword id="KW-0472">Membrane</keyword>
<keyword id="KW-0597">Phosphoprotein</keyword>
<keyword id="KW-0653">Protein transport</keyword>
<keyword id="KW-1267">Proteomics identification</keyword>
<keyword id="KW-1185">Reference proteome</keyword>
<keyword id="KW-0813">Transport</keyword>
<name>AP1M2_HUMAN</name>
<gene>
    <name type="primary">AP1M2</name>
</gene>
<sequence length="423" mass="48108">MSASAVFILDVKGKPLISRNYKGDVAMSKIEHFMPLLVQREEEGALAPLLSHGQVHFLWIKHSNLYLVATTSKNANASLVYSFLYKTIEVFCEYFKELEEESIRDNFVIVYELLDELMDFGFPQTTDSKILQEYITQQSNKLETGKSRVPPTVTNAVSWRSEGIKYKKNEVFIDVIESVNLLVNANGSVLLSEIVGTIKLKVFLSGMPELRLGLNDRVLFELTGRSKNKSVELEDVKFHQCVRLSRFDNDRTISFIPPDGDFELMSYRLSTQVKPLIWIESVIEKFSHSRVEIMVKAKGQFKKQSVANGVEISVPVPSDADSPRFKTSVGSAKYVPERNVVIWSIKSFPGGKEYLMRAHFGLPSVEKEEVEGRPPIGVKFEIPYFTVSGIQVRYMKIIEKSGYQALPWVRYITQSGDYQLRTS</sequence>